<evidence type="ECO:0000250" key="1">
    <source>
        <dbReference type="UniProtKB" id="P50389"/>
    </source>
</evidence>
<evidence type="ECO:0000255" key="2">
    <source>
        <dbReference type="HAMAP-Rule" id="MF_01627"/>
    </source>
</evidence>
<comment type="function">
    <text evidence="2">Catalyzes the reversible phosphorolytic breakdown of the N-glycosidic bond in the beta-(deoxy)ribonucleoside molecules, with the formation of the corresponding free purine bases and pentose-1-phosphate.</text>
</comment>
<comment type="catalytic activity">
    <reaction evidence="2">
        <text>a purine D-ribonucleoside + phosphate = a purine nucleobase + alpha-D-ribose 1-phosphate</text>
        <dbReference type="Rhea" id="RHEA:19805"/>
        <dbReference type="ChEBI" id="CHEBI:26386"/>
        <dbReference type="ChEBI" id="CHEBI:43474"/>
        <dbReference type="ChEBI" id="CHEBI:57720"/>
        <dbReference type="ChEBI" id="CHEBI:142355"/>
        <dbReference type="EC" id="2.4.2.1"/>
    </reaction>
</comment>
<comment type="catalytic activity">
    <reaction evidence="2">
        <text>a purine 2'-deoxy-D-ribonucleoside + phosphate = a purine nucleobase + 2-deoxy-alpha-D-ribose 1-phosphate</text>
        <dbReference type="Rhea" id="RHEA:36431"/>
        <dbReference type="ChEBI" id="CHEBI:26386"/>
        <dbReference type="ChEBI" id="CHEBI:43474"/>
        <dbReference type="ChEBI" id="CHEBI:57259"/>
        <dbReference type="ChEBI" id="CHEBI:142361"/>
        <dbReference type="EC" id="2.4.2.1"/>
    </reaction>
</comment>
<comment type="subunit">
    <text evidence="2">Homohexamer; trimer of homodimers.</text>
</comment>
<comment type="similarity">
    <text evidence="2">Belongs to the PNP/UDP phosphorylase family.</text>
</comment>
<protein>
    <recommendedName>
        <fullName evidence="2">Purine nucleoside phosphorylase DeoD-type</fullName>
        <shortName evidence="2">PNP</shortName>
        <ecNumber evidence="2">2.4.2.1</ecNumber>
    </recommendedName>
</protein>
<keyword id="KW-0328">Glycosyltransferase</keyword>
<keyword id="KW-1185">Reference proteome</keyword>
<keyword id="KW-0808">Transferase</keyword>
<feature type="chain" id="PRO_1000069634" description="Purine nucleoside phosphorylase DeoD-type">
    <location>
        <begin position="1"/>
        <end position="236"/>
    </location>
</feature>
<feature type="active site" description="Proton donor" evidence="2">
    <location>
        <position position="205"/>
    </location>
</feature>
<feature type="binding site" evidence="1">
    <location>
        <position position="5"/>
    </location>
    <ligand>
        <name>a purine D-ribonucleoside</name>
        <dbReference type="ChEBI" id="CHEBI:142355"/>
        <note>ligand shared between dimeric partners</note>
    </ligand>
</feature>
<feature type="binding site" description="in other chain" evidence="1">
    <location>
        <position position="21"/>
    </location>
    <ligand>
        <name>phosphate</name>
        <dbReference type="ChEBI" id="CHEBI:43474"/>
        <note>ligand shared between dimeric partners</note>
    </ligand>
</feature>
<feature type="binding site" description="in other chain" evidence="1">
    <location>
        <position position="25"/>
    </location>
    <ligand>
        <name>phosphate</name>
        <dbReference type="ChEBI" id="CHEBI:43474"/>
        <note>ligand shared between dimeric partners</note>
    </ligand>
</feature>
<feature type="binding site" evidence="1">
    <location>
        <position position="44"/>
    </location>
    <ligand>
        <name>phosphate</name>
        <dbReference type="ChEBI" id="CHEBI:43474"/>
        <note>ligand shared between dimeric partners</note>
    </ligand>
</feature>
<feature type="binding site" description="in other chain" evidence="1">
    <location>
        <begin position="88"/>
        <end position="91"/>
    </location>
    <ligand>
        <name>phosphate</name>
        <dbReference type="ChEBI" id="CHEBI:43474"/>
        <note>ligand shared between dimeric partners</note>
    </ligand>
</feature>
<feature type="binding site" description="in other chain" evidence="1">
    <location>
        <begin position="180"/>
        <end position="182"/>
    </location>
    <ligand>
        <name>a purine D-ribonucleoside</name>
        <dbReference type="ChEBI" id="CHEBI:142355"/>
        <note>ligand shared between dimeric partners</note>
    </ligand>
</feature>
<feature type="binding site" description="in other chain" evidence="1">
    <location>
        <begin position="204"/>
        <end position="205"/>
    </location>
    <ligand>
        <name>a purine D-ribonucleoside</name>
        <dbReference type="ChEBI" id="CHEBI:142355"/>
        <note>ligand shared between dimeric partners</note>
    </ligand>
</feature>
<feature type="site" description="Important for catalytic activity" evidence="2">
    <location>
        <position position="218"/>
    </location>
</feature>
<reference key="1">
    <citation type="journal article" date="2005" name="Nucleic Acids Res.">
        <title>Genomic blueprint of Hahella chejuensis, a marine microbe producing an algicidal agent.</title>
        <authorList>
            <person name="Jeong H."/>
            <person name="Yim J.H."/>
            <person name="Lee C."/>
            <person name="Choi S.-H."/>
            <person name="Park Y.K."/>
            <person name="Yoon S.H."/>
            <person name="Hur C.-G."/>
            <person name="Kang H.-Y."/>
            <person name="Kim D."/>
            <person name="Lee H.H."/>
            <person name="Park K.H."/>
            <person name="Park S.-H."/>
            <person name="Park H.-S."/>
            <person name="Lee H.K."/>
            <person name="Oh T.K."/>
            <person name="Kim J.F."/>
        </authorList>
    </citation>
    <scope>NUCLEOTIDE SEQUENCE [LARGE SCALE GENOMIC DNA]</scope>
    <source>
        <strain>KCTC 2396</strain>
    </source>
</reference>
<sequence length="236" mass="25417">MATPHIAANPGDFADTVLMPGDPLRAKHIAETYLANPVLVNDVRGMLGYTGEYRGRMLSVMGSGMGVPSISIYAHELFTQFNVKNIVRIGSCGSIRDEVKVRDIVIGMGAGTDSLVNRVRLNHYDFAAIADYDLLEPVVNAARRREARFHVGALFTTDLFYAADPGLTERLSAHGVKAVEMEAAGLYGVAAECGGKALALCTVSDHLLSGERLSPEERRTSFNDMVEIALEAAVGF</sequence>
<organism>
    <name type="scientific">Hahella chejuensis (strain KCTC 2396)</name>
    <dbReference type="NCBI Taxonomy" id="349521"/>
    <lineage>
        <taxon>Bacteria</taxon>
        <taxon>Pseudomonadati</taxon>
        <taxon>Pseudomonadota</taxon>
        <taxon>Gammaproteobacteria</taxon>
        <taxon>Oceanospirillales</taxon>
        <taxon>Hahellaceae</taxon>
        <taxon>Hahella</taxon>
    </lineage>
</organism>
<proteinExistence type="inferred from homology"/>
<accession>Q2SHN2</accession>
<name>DEOD_HAHCH</name>
<gene>
    <name evidence="2" type="primary">deoD</name>
    <name type="ordered locus">HCH_03076</name>
</gene>
<dbReference type="EC" id="2.4.2.1" evidence="2"/>
<dbReference type="EMBL" id="CP000155">
    <property type="protein sequence ID" value="ABC29842.1"/>
    <property type="molecule type" value="Genomic_DNA"/>
</dbReference>
<dbReference type="RefSeq" id="WP_011396911.1">
    <property type="nucleotide sequence ID" value="NC_007645.1"/>
</dbReference>
<dbReference type="SMR" id="Q2SHN2"/>
<dbReference type="STRING" id="349521.HCH_03076"/>
<dbReference type="KEGG" id="hch:HCH_03076"/>
<dbReference type="eggNOG" id="COG0813">
    <property type="taxonomic scope" value="Bacteria"/>
</dbReference>
<dbReference type="HOGENOM" id="CLU_068457_2_0_6"/>
<dbReference type="OrthoDB" id="9782889at2"/>
<dbReference type="Proteomes" id="UP000000238">
    <property type="component" value="Chromosome"/>
</dbReference>
<dbReference type="GO" id="GO:0005829">
    <property type="term" value="C:cytosol"/>
    <property type="evidence" value="ECO:0007669"/>
    <property type="project" value="TreeGrafter"/>
</dbReference>
<dbReference type="GO" id="GO:0004731">
    <property type="term" value="F:purine-nucleoside phosphorylase activity"/>
    <property type="evidence" value="ECO:0007669"/>
    <property type="project" value="UniProtKB-UniRule"/>
</dbReference>
<dbReference type="GO" id="GO:0006152">
    <property type="term" value="P:purine nucleoside catabolic process"/>
    <property type="evidence" value="ECO:0007669"/>
    <property type="project" value="TreeGrafter"/>
</dbReference>
<dbReference type="CDD" id="cd09006">
    <property type="entry name" value="PNP_EcPNPI-like"/>
    <property type="match status" value="1"/>
</dbReference>
<dbReference type="Gene3D" id="3.40.50.1580">
    <property type="entry name" value="Nucleoside phosphorylase domain"/>
    <property type="match status" value="1"/>
</dbReference>
<dbReference type="HAMAP" id="MF_01627">
    <property type="entry name" value="Pur_nucleosid_phosp"/>
    <property type="match status" value="1"/>
</dbReference>
<dbReference type="InterPro" id="IPR004402">
    <property type="entry name" value="DeoD-type"/>
</dbReference>
<dbReference type="InterPro" id="IPR018016">
    <property type="entry name" value="Nucleoside_phosphorylase_CS"/>
</dbReference>
<dbReference type="InterPro" id="IPR000845">
    <property type="entry name" value="Nucleoside_phosphorylase_d"/>
</dbReference>
<dbReference type="InterPro" id="IPR035994">
    <property type="entry name" value="Nucleoside_phosphorylase_sf"/>
</dbReference>
<dbReference type="NCBIfam" id="TIGR00107">
    <property type="entry name" value="deoD"/>
    <property type="match status" value="1"/>
</dbReference>
<dbReference type="NCBIfam" id="NF004489">
    <property type="entry name" value="PRK05819.1"/>
    <property type="match status" value="1"/>
</dbReference>
<dbReference type="NCBIfam" id="NF009914">
    <property type="entry name" value="PRK13374.1"/>
    <property type="match status" value="1"/>
</dbReference>
<dbReference type="PANTHER" id="PTHR43691:SF11">
    <property type="entry name" value="FI09636P-RELATED"/>
    <property type="match status" value="1"/>
</dbReference>
<dbReference type="PANTHER" id="PTHR43691">
    <property type="entry name" value="URIDINE PHOSPHORYLASE"/>
    <property type="match status" value="1"/>
</dbReference>
<dbReference type="Pfam" id="PF01048">
    <property type="entry name" value="PNP_UDP_1"/>
    <property type="match status" value="1"/>
</dbReference>
<dbReference type="SUPFAM" id="SSF53167">
    <property type="entry name" value="Purine and uridine phosphorylases"/>
    <property type="match status" value="1"/>
</dbReference>
<dbReference type="PROSITE" id="PS01232">
    <property type="entry name" value="PNP_UDP_1"/>
    <property type="match status" value="1"/>
</dbReference>